<sequence>MGQKVNPIGFRLGVIKTWDSKWYAEKDFAKLLHEDLKLKSFLKKRLYHSGVSKIEIERAAGKAKINIYTARPGLIIGKKGSEVETLKKELAKLTDKEVYLNIQEVRKPELDAQLVSENIALQLERRVAFRRAMKKSVTSSLKFGAKGIRITCSGRLGGAEMSRTEWYREGRVPLHTLRADIDYGFAEAKTTYGIIGVKVLIFKGEVLSGK</sequence>
<dbReference type="EMBL" id="CP001390">
    <property type="protein sequence ID" value="ACM21960.1"/>
    <property type="molecule type" value="Genomic_DNA"/>
</dbReference>
<dbReference type="RefSeq" id="WP_012648687.1">
    <property type="nucleotide sequence ID" value="NC_011979.1"/>
</dbReference>
<dbReference type="SMR" id="B9M6H2"/>
<dbReference type="STRING" id="316067.Geob_3619"/>
<dbReference type="KEGG" id="geo:Geob_3619"/>
<dbReference type="eggNOG" id="COG0092">
    <property type="taxonomic scope" value="Bacteria"/>
</dbReference>
<dbReference type="HOGENOM" id="CLU_058591_0_2_7"/>
<dbReference type="OrthoDB" id="9806396at2"/>
<dbReference type="Proteomes" id="UP000007721">
    <property type="component" value="Chromosome"/>
</dbReference>
<dbReference type="GO" id="GO:0022627">
    <property type="term" value="C:cytosolic small ribosomal subunit"/>
    <property type="evidence" value="ECO:0007669"/>
    <property type="project" value="TreeGrafter"/>
</dbReference>
<dbReference type="GO" id="GO:0003729">
    <property type="term" value="F:mRNA binding"/>
    <property type="evidence" value="ECO:0007669"/>
    <property type="project" value="UniProtKB-UniRule"/>
</dbReference>
<dbReference type="GO" id="GO:0019843">
    <property type="term" value="F:rRNA binding"/>
    <property type="evidence" value="ECO:0007669"/>
    <property type="project" value="UniProtKB-UniRule"/>
</dbReference>
<dbReference type="GO" id="GO:0003735">
    <property type="term" value="F:structural constituent of ribosome"/>
    <property type="evidence" value="ECO:0007669"/>
    <property type="project" value="InterPro"/>
</dbReference>
<dbReference type="GO" id="GO:0006412">
    <property type="term" value="P:translation"/>
    <property type="evidence" value="ECO:0007669"/>
    <property type="project" value="UniProtKB-UniRule"/>
</dbReference>
<dbReference type="CDD" id="cd02412">
    <property type="entry name" value="KH-II_30S_S3"/>
    <property type="match status" value="1"/>
</dbReference>
<dbReference type="FunFam" id="3.30.1140.32:FF:000009">
    <property type="entry name" value="30S ribosomal protein S3"/>
    <property type="match status" value="1"/>
</dbReference>
<dbReference type="FunFam" id="3.30.300.20:FF:000001">
    <property type="entry name" value="30S ribosomal protein S3"/>
    <property type="match status" value="1"/>
</dbReference>
<dbReference type="Gene3D" id="3.30.300.20">
    <property type="match status" value="1"/>
</dbReference>
<dbReference type="Gene3D" id="3.30.1140.32">
    <property type="entry name" value="Ribosomal protein S3, C-terminal domain"/>
    <property type="match status" value="1"/>
</dbReference>
<dbReference type="HAMAP" id="MF_01309_B">
    <property type="entry name" value="Ribosomal_uS3_B"/>
    <property type="match status" value="1"/>
</dbReference>
<dbReference type="InterPro" id="IPR004087">
    <property type="entry name" value="KH_dom"/>
</dbReference>
<dbReference type="InterPro" id="IPR015946">
    <property type="entry name" value="KH_dom-like_a/b"/>
</dbReference>
<dbReference type="InterPro" id="IPR004044">
    <property type="entry name" value="KH_dom_type_2"/>
</dbReference>
<dbReference type="InterPro" id="IPR009019">
    <property type="entry name" value="KH_sf_prok-type"/>
</dbReference>
<dbReference type="InterPro" id="IPR036419">
    <property type="entry name" value="Ribosomal_S3_C_sf"/>
</dbReference>
<dbReference type="InterPro" id="IPR005704">
    <property type="entry name" value="Ribosomal_uS3_bac-typ"/>
</dbReference>
<dbReference type="InterPro" id="IPR001351">
    <property type="entry name" value="Ribosomal_uS3_C"/>
</dbReference>
<dbReference type="InterPro" id="IPR018280">
    <property type="entry name" value="Ribosomal_uS3_CS"/>
</dbReference>
<dbReference type="NCBIfam" id="TIGR01009">
    <property type="entry name" value="rpsC_bact"/>
    <property type="match status" value="1"/>
</dbReference>
<dbReference type="PANTHER" id="PTHR11760">
    <property type="entry name" value="30S/40S RIBOSOMAL PROTEIN S3"/>
    <property type="match status" value="1"/>
</dbReference>
<dbReference type="PANTHER" id="PTHR11760:SF19">
    <property type="entry name" value="SMALL RIBOSOMAL SUBUNIT PROTEIN US3C"/>
    <property type="match status" value="1"/>
</dbReference>
<dbReference type="Pfam" id="PF07650">
    <property type="entry name" value="KH_2"/>
    <property type="match status" value="1"/>
</dbReference>
<dbReference type="Pfam" id="PF00189">
    <property type="entry name" value="Ribosomal_S3_C"/>
    <property type="match status" value="1"/>
</dbReference>
<dbReference type="SMART" id="SM00322">
    <property type="entry name" value="KH"/>
    <property type="match status" value="1"/>
</dbReference>
<dbReference type="SUPFAM" id="SSF54814">
    <property type="entry name" value="Prokaryotic type KH domain (KH-domain type II)"/>
    <property type="match status" value="1"/>
</dbReference>
<dbReference type="SUPFAM" id="SSF54821">
    <property type="entry name" value="Ribosomal protein S3 C-terminal domain"/>
    <property type="match status" value="1"/>
</dbReference>
<dbReference type="PROSITE" id="PS50823">
    <property type="entry name" value="KH_TYPE_2"/>
    <property type="match status" value="1"/>
</dbReference>
<dbReference type="PROSITE" id="PS00548">
    <property type="entry name" value="RIBOSOMAL_S3"/>
    <property type="match status" value="1"/>
</dbReference>
<keyword id="KW-1185">Reference proteome</keyword>
<keyword id="KW-0687">Ribonucleoprotein</keyword>
<keyword id="KW-0689">Ribosomal protein</keyword>
<keyword id="KW-0694">RNA-binding</keyword>
<keyword id="KW-0699">rRNA-binding</keyword>
<gene>
    <name evidence="1" type="primary">rpsC</name>
    <name type="ordered locus">Geob_3619</name>
</gene>
<proteinExistence type="inferred from homology"/>
<feature type="chain" id="PRO_1000165497" description="Small ribosomal subunit protein uS3">
    <location>
        <begin position="1"/>
        <end position="210"/>
    </location>
</feature>
<feature type="domain" description="KH type-2" evidence="1">
    <location>
        <begin position="38"/>
        <end position="106"/>
    </location>
</feature>
<protein>
    <recommendedName>
        <fullName evidence="1">Small ribosomal subunit protein uS3</fullName>
    </recommendedName>
    <alternativeName>
        <fullName evidence="2">30S ribosomal protein S3</fullName>
    </alternativeName>
</protein>
<evidence type="ECO:0000255" key="1">
    <source>
        <dbReference type="HAMAP-Rule" id="MF_01309"/>
    </source>
</evidence>
<evidence type="ECO:0000305" key="2"/>
<organism>
    <name type="scientific">Geotalea daltonii (strain DSM 22248 / JCM 15807 / FRC-32)</name>
    <name type="common">Geobacter daltonii</name>
    <dbReference type="NCBI Taxonomy" id="316067"/>
    <lineage>
        <taxon>Bacteria</taxon>
        <taxon>Pseudomonadati</taxon>
        <taxon>Thermodesulfobacteriota</taxon>
        <taxon>Desulfuromonadia</taxon>
        <taxon>Geobacterales</taxon>
        <taxon>Geobacteraceae</taxon>
        <taxon>Geotalea</taxon>
    </lineage>
</organism>
<comment type="function">
    <text evidence="1">Binds the lower part of the 30S subunit head. Binds mRNA in the 70S ribosome, positioning it for translation.</text>
</comment>
<comment type="subunit">
    <text evidence="1">Part of the 30S ribosomal subunit. Forms a tight complex with proteins S10 and S14.</text>
</comment>
<comment type="similarity">
    <text evidence="1">Belongs to the universal ribosomal protein uS3 family.</text>
</comment>
<name>RS3_GEODF</name>
<reference key="1">
    <citation type="submission" date="2009-01" db="EMBL/GenBank/DDBJ databases">
        <title>Complete sequence of Geobacter sp. FRC-32.</title>
        <authorList>
            <consortium name="US DOE Joint Genome Institute"/>
            <person name="Lucas S."/>
            <person name="Copeland A."/>
            <person name="Lapidus A."/>
            <person name="Glavina del Rio T."/>
            <person name="Dalin E."/>
            <person name="Tice H."/>
            <person name="Bruce D."/>
            <person name="Goodwin L."/>
            <person name="Pitluck S."/>
            <person name="Saunders E."/>
            <person name="Brettin T."/>
            <person name="Detter J.C."/>
            <person name="Han C."/>
            <person name="Larimer F."/>
            <person name="Land M."/>
            <person name="Hauser L."/>
            <person name="Kyrpides N."/>
            <person name="Ovchinnikova G."/>
            <person name="Kostka J."/>
            <person name="Richardson P."/>
        </authorList>
    </citation>
    <scope>NUCLEOTIDE SEQUENCE [LARGE SCALE GENOMIC DNA]</scope>
    <source>
        <strain>DSM 22248 / JCM 15807 / FRC-32</strain>
    </source>
</reference>
<accession>B9M6H2</accession>